<organism>
    <name type="scientific">Aspergillus flavus (strain ATCC 200026 / FGSC A1120 / IAM 13836 / NRRL 3357 / JCM 12722 / SRRC 167)</name>
    <dbReference type="NCBI Taxonomy" id="332952"/>
    <lineage>
        <taxon>Eukaryota</taxon>
        <taxon>Fungi</taxon>
        <taxon>Dikarya</taxon>
        <taxon>Ascomycota</taxon>
        <taxon>Pezizomycotina</taxon>
        <taxon>Eurotiomycetes</taxon>
        <taxon>Eurotiomycetidae</taxon>
        <taxon>Eurotiales</taxon>
        <taxon>Aspergillaceae</taxon>
        <taxon>Aspergillus</taxon>
        <taxon>Aspergillus subgen. Circumdati</taxon>
    </lineage>
</organism>
<gene>
    <name evidence="6" type="primary">flvG</name>
    <name type="ORF">AFLA_135470</name>
</gene>
<evidence type="ECO:0000250" key="1">
    <source>
        <dbReference type="UniProtKB" id="P00860"/>
    </source>
</evidence>
<evidence type="ECO:0000250" key="2">
    <source>
        <dbReference type="UniProtKB" id="P07805"/>
    </source>
</evidence>
<evidence type="ECO:0000250" key="3">
    <source>
        <dbReference type="UniProtKB" id="P08432"/>
    </source>
</evidence>
<evidence type="ECO:0000250" key="4">
    <source>
        <dbReference type="UniProtKB" id="P11926"/>
    </source>
</evidence>
<evidence type="ECO:0000269" key="5">
    <source>
    </source>
</evidence>
<evidence type="ECO:0000303" key="6">
    <source>
    </source>
</evidence>
<evidence type="ECO:0000305" key="7"/>
<comment type="function">
    <text evidence="5">Decarboxylase; part of the gene cluster that mediates the biosynthesis of flavunoidine, an alkaloidal terpenoid with a tetracyclic cage-like core connected to dimethylcadaverine via a C-N bond and acylated with 5,5-dimethyl-L-pipecolate (PubMed:31885262). The tetracyclic core is synthesized by the terpene cyclase flvE and the cytochrome P450 monooxygenase flvD (PubMed:31885262). The terpene cyclase flvE catalyzes the cyclization of farnesyl pyrophosphate (FPP) to form (1R,4R,5S)-(+)-acoradiene and the cytochrome P450 monooxygenase flvD is then responsible for oxidative conversion of (1R,4R,5S)-(+)-acoradiene into the tetracyclic cage present in the final product flavunoidine (PubMed:31885262). In parallel, the N-methyltransferase flvH dimethylates L-lysine to give N,N-dimethyl-L-Lysin which is decarboxylated by flvG to afford dimethylcadaverine (PubMed:31885262). The terpene cyclase-like protein flvF is the enzyme that attaches the dimethylcadaverine precusor at the C-7 of the tetracyclic cage to yield pre-flavunoidine (PubMed:31885262). The cytochrome monooxygenase flvC hydroxylates the C-10 position of pre-flavunoidine whereas the NRPS flvI acylates the terpenoid core at the hydroxylated C-10 with dimethylpipecolate to yield final flavunoidine (PubMed:31885262). The bifunctional enzyme flvA and the dehydrogenase flvB are responsible for the synthesis of the dimethylpipecolate precursor (PubMed:31885262). The PLP-dependent lyase domain of flvA might use L-O-acetyl-homoserine and alpha-keto-isovalerate to form an intermediary ketone that can cyclize intramolecularly to yield an imine (PubMed:31885262). The imine can be reduced by flvB to yield the 6-carboxylated pipecolate (PubMed:31885262). The C-terminal alpha-KG-dependent oxygenase domain of flvA is then proposed to catalyze the decarboxylation to yield dimethylpipecolate (PubMed:31885262).</text>
</comment>
<comment type="catalytic activity">
    <reaction evidence="5">
        <text>N(6),N(6)-dimethyl-L-lysine + H(+) = N,N-dimethyl-cadaverine + CO2</text>
        <dbReference type="Rhea" id="RHEA:74527"/>
        <dbReference type="ChEBI" id="CHEBI:15378"/>
        <dbReference type="ChEBI" id="CHEBI:16526"/>
        <dbReference type="ChEBI" id="CHEBI:193107"/>
        <dbReference type="ChEBI" id="CHEBI:193108"/>
    </reaction>
    <physiologicalReaction direction="left-to-right" evidence="5">
        <dbReference type="Rhea" id="RHEA:74528"/>
    </physiologicalReaction>
</comment>
<comment type="cofactor">
    <cofactor evidence="4">
        <name>pyridoxal 5'-phosphate</name>
        <dbReference type="ChEBI" id="CHEBI:597326"/>
    </cofactor>
</comment>
<comment type="pathway">
    <text evidence="5">Secondary metabolite biosynthesis; terpenoid biosynthesis.</text>
</comment>
<comment type="subunit">
    <text evidence="4">Homodimer (By similarity). Only the dimer is catalytically active, as the active sites are constructed of residues from both monomers (By similarity).</text>
</comment>
<comment type="subcellular location">
    <subcellularLocation>
        <location evidence="3">Cytoplasm</location>
    </subcellularLocation>
</comment>
<comment type="similarity">
    <text evidence="7">Belongs to the Orn/Lys/Arg decarboxylase class-II family.</text>
</comment>
<feature type="chain" id="PRO_0000454483" description="Decarboxylase flvG">
    <location>
        <begin position="1"/>
        <end position="425"/>
    </location>
</feature>
<feature type="active site" description="Proton donor; shared with dimeric partner" evidence="4">
    <location>
        <position position="365"/>
    </location>
</feature>
<feature type="binding site" evidence="4">
    <location>
        <position position="213"/>
    </location>
    <ligand>
        <name>pyridoxal 5'-phosphate</name>
        <dbReference type="ChEBI" id="CHEBI:597326"/>
    </ligand>
</feature>
<feature type="binding site" evidence="4">
    <location>
        <position position="250"/>
    </location>
    <ligand>
        <name>pyridoxal 5'-phosphate</name>
        <dbReference type="ChEBI" id="CHEBI:597326"/>
    </ligand>
</feature>
<feature type="binding site" evidence="4">
    <location>
        <begin position="281"/>
        <end position="284"/>
    </location>
    <ligand>
        <name>pyridoxal 5'-phosphate</name>
        <dbReference type="ChEBI" id="CHEBI:597326"/>
    </ligand>
</feature>
<feature type="binding site" description="in other chain" evidence="2">
    <location>
        <begin position="331"/>
        <end position="332"/>
    </location>
    <ligand>
        <name>substrate</name>
        <note>ligand shared between dimeric partners</note>
    </ligand>
</feature>
<feature type="binding site" evidence="2">
    <location>
        <position position="366"/>
    </location>
    <ligand>
        <name>substrate</name>
        <note>ligand shared between dimeric partners</note>
    </ligand>
</feature>
<feature type="binding site" evidence="4">
    <location>
        <position position="395"/>
    </location>
    <ligand>
        <name>pyridoxal 5'-phosphate</name>
        <dbReference type="ChEBI" id="CHEBI:597326"/>
    </ligand>
</feature>
<feature type="site" description="Stacks against the aromatic ring of pyridoxal phosphate and stabilizes reaction intermediates" evidence="1">
    <location>
        <position position="210"/>
    </location>
</feature>
<feature type="modified residue" description="N6-(pyridoxal phosphate)lysine" evidence="4">
    <location>
        <position position="82"/>
    </location>
</feature>
<sequence length="425" mass="46911">MPYATEETSSVAWFPEGNLCHSKTCGPRTNGIVLEAMKGKLSQPSEWDRSEPFCVMDLGYVYNEYQRWTSLLPDVKPFYAVKCNPDTHIIKVLNAMNSGFDCASRNEMELVMSQGVAPERIIFANPCKKISDLEYAQQSGVRKMTFDNEAELQKIRQRFPDAQLILRCLASDPSATYSLGSKFGASSATSVKLLQCAKSWGLSVVGVSFHIGSNAKDPTAFDKAIQNSREVFDAGLRTGHDMHLLDIGGGFSAHNFDAMASSIRQCIGKYFCGIDVEIVAEPGRYFAAGALTLACGIIGRRDAAANDEDKENRHMLYLNDGVYGTFICNIFEPGPQPKVLRASGDFYPLDSEDEYERYTIWGPTCDGTDCVAESVALPKSLAIDDWLYFPEMGAYSTCLSTGFNGFHSDRETIYMSSDPAADIYL</sequence>
<accession>B8NHE2</accession>
<reference key="1">
    <citation type="journal article" date="2015" name="Genome Announc.">
        <title>Genome sequence of Aspergillus flavus NRRL 3357, a strain that causes aflatoxin contamination of food and feed.</title>
        <authorList>
            <person name="Nierman W.C."/>
            <person name="Yu J."/>
            <person name="Fedorova-Abrams N.D."/>
            <person name="Losada L."/>
            <person name="Cleveland T.E."/>
            <person name="Bhatnagar D."/>
            <person name="Bennett J.W."/>
            <person name="Dean R."/>
            <person name="Payne G.A."/>
        </authorList>
    </citation>
    <scope>NUCLEOTIDE SEQUENCE [LARGE SCALE GENOMIC DNA]</scope>
    <source>
        <strain>ATCC 200026 / FGSC A1120 / IAM 13836 / NRRL 3357 / JCM 12722 / SRRC 167</strain>
    </source>
</reference>
<reference key="2">
    <citation type="journal article" date="2020" name="J. Am. Chem. Soc.">
        <title>Genome mining of alkaloidal terpenoids from a hybrid terpene and nonribosomal peptide biosynthetic pathway.</title>
        <authorList>
            <person name="Yee D.A."/>
            <person name="Kakule T.B."/>
            <person name="Cheng W."/>
            <person name="Chen M."/>
            <person name="Chong C.T.Y."/>
            <person name="Hai Y."/>
            <person name="Hang L.F."/>
            <person name="Hung Y.S."/>
            <person name="Liu N."/>
            <person name="Ohashi M."/>
            <person name="Okorafor I.C."/>
            <person name="Song Y."/>
            <person name="Tang M."/>
            <person name="Zhang Z."/>
            <person name="Tang Y."/>
        </authorList>
    </citation>
    <scope>FUNCTION</scope>
    <scope>CATALYTIC ACTIVITY</scope>
    <scope>PATHWAY</scope>
</reference>
<protein>
    <recommendedName>
        <fullName evidence="6">Decarboxylase flvG</fullName>
        <ecNumber evidence="5">4.1.1.-</ecNumber>
    </recommendedName>
    <alternativeName>
        <fullName evidence="6">Flavunoidine biosynthesis cluster protein G</fullName>
    </alternativeName>
</protein>
<dbReference type="EC" id="4.1.1.-" evidence="5"/>
<dbReference type="EMBL" id="EQ963478">
    <property type="protein sequence ID" value="EED50784.1"/>
    <property type="molecule type" value="Genomic_DNA"/>
</dbReference>
<dbReference type="RefSeq" id="XP_002379560.1">
    <property type="nucleotide sequence ID" value="XM_002379519.1"/>
</dbReference>
<dbReference type="SMR" id="B8NHE2"/>
<dbReference type="STRING" id="332952.B8NHE2"/>
<dbReference type="EnsemblFungi" id="EED50784">
    <property type="protein sequence ID" value="EED50784"/>
    <property type="gene ID" value="AFLA_135470"/>
</dbReference>
<dbReference type="VEuPathDB" id="FungiDB:AFLA_005901"/>
<dbReference type="eggNOG" id="KOG0622">
    <property type="taxonomic scope" value="Eukaryota"/>
</dbReference>
<dbReference type="HOGENOM" id="CLU_026444_1_2_1"/>
<dbReference type="OMA" id="FTCYSVK"/>
<dbReference type="UniPathway" id="UPA00213"/>
<dbReference type="GO" id="GO:0005737">
    <property type="term" value="C:cytoplasm"/>
    <property type="evidence" value="ECO:0007669"/>
    <property type="project" value="UniProtKB-SubCell"/>
</dbReference>
<dbReference type="GO" id="GO:0004586">
    <property type="term" value="F:ornithine decarboxylase activity"/>
    <property type="evidence" value="ECO:0007669"/>
    <property type="project" value="TreeGrafter"/>
</dbReference>
<dbReference type="GO" id="GO:0033387">
    <property type="term" value="P:putrescine biosynthetic process from arginine, via ornithine"/>
    <property type="evidence" value="ECO:0007669"/>
    <property type="project" value="TreeGrafter"/>
</dbReference>
<dbReference type="GO" id="GO:0016114">
    <property type="term" value="P:terpenoid biosynthetic process"/>
    <property type="evidence" value="ECO:0007669"/>
    <property type="project" value="UniProtKB-UniPathway"/>
</dbReference>
<dbReference type="CDD" id="cd00622">
    <property type="entry name" value="PLPDE_III_ODC"/>
    <property type="match status" value="1"/>
</dbReference>
<dbReference type="FunFam" id="3.20.20.10:FF:000005">
    <property type="entry name" value="Ornithine decarboxylase"/>
    <property type="match status" value="1"/>
</dbReference>
<dbReference type="Gene3D" id="3.20.20.10">
    <property type="entry name" value="Alanine racemase"/>
    <property type="match status" value="1"/>
</dbReference>
<dbReference type="Gene3D" id="2.40.37.10">
    <property type="entry name" value="Lyase, Ornithine Decarboxylase, Chain A, domain 1"/>
    <property type="match status" value="1"/>
</dbReference>
<dbReference type="InterPro" id="IPR009006">
    <property type="entry name" value="Ala_racemase/Decarboxylase_C"/>
</dbReference>
<dbReference type="InterPro" id="IPR022643">
    <property type="entry name" value="De-COase2_C"/>
</dbReference>
<dbReference type="InterPro" id="IPR022644">
    <property type="entry name" value="De-COase2_N"/>
</dbReference>
<dbReference type="InterPro" id="IPR000183">
    <property type="entry name" value="Orn/DAP/Arg_de-COase"/>
</dbReference>
<dbReference type="InterPro" id="IPR002433">
    <property type="entry name" value="Orn_de-COase"/>
</dbReference>
<dbReference type="InterPro" id="IPR029066">
    <property type="entry name" value="PLP-binding_barrel"/>
</dbReference>
<dbReference type="PANTHER" id="PTHR11482">
    <property type="entry name" value="ARGININE/DIAMINOPIMELATE/ORNITHINE DECARBOXYLASE"/>
    <property type="match status" value="1"/>
</dbReference>
<dbReference type="PANTHER" id="PTHR11482:SF6">
    <property type="entry name" value="ORNITHINE DECARBOXYLASE 1-RELATED"/>
    <property type="match status" value="1"/>
</dbReference>
<dbReference type="Pfam" id="PF02784">
    <property type="entry name" value="Orn_Arg_deC_N"/>
    <property type="match status" value="1"/>
</dbReference>
<dbReference type="Pfam" id="PF00278">
    <property type="entry name" value="Orn_DAP_Arg_deC"/>
    <property type="match status" value="1"/>
</dbReference>
<dbReference type="PRINTS" id="PR01179">
    <property type="entry name" value="ODADCRBXLASE"/>
</dbReference>
<dbReference type="PRINTS" id="PR01182">
    <property type="entry name" value="ORNDCRBXLASE"/>
</dbReference>
<dbReference type="SUPFAM" id="SSF50621">
    <property type="entry name" value="Alanine racemase C-terminal domain-like"/>
    <property type="match status" value="1"/>
</dbReference>
<dbReference type="SUPFAM" id="SSF51419">
    <property type="entry name" value="PLP-binding barrel"/>
    <property type="match status" value="1"/>
</dbReference>
<dbReference type="PROSITE" id="PS00879">
    <property type="entry name" value="ODR_DC_2_2"/>
    <property type="match status" value="1"/>
</dbReference>
<keyword id="KW-0963">Cytoplasm</keyword>
<keyword id="KW-0210">Decarboxylase</keyword>
<keyword id="KW-0456">Lyase</keyword>
<keyword id="KW-0663">Pyridoxal phosphate</keyword>
<proteinExistence type="evidence at protein level"/>
<name>FLVG_ASPFN</name>